<comment type="function">
    <text evidence="1">Catalyzes the condensation of pantoate with beta-alanine in an ATP-dependent reaction via a pantoyl-adenylate intermediate.</text>
</comment>
<comment type="catalytic activity">
    <reaction evidence="1">
        <text>(R)-pantoate + beta-alanine + ATP = (R)-pantothenate + AMP + diphosphate + H(+)</text>
        <dbReference type="Rhea" id="RHEA:10912"/>
        <dbReference type="ChEBI" id="CHEBI:15378"/>
        <dbReference type="ChEBI" id="CHEBI:15980"/>
        <dbReference type="ChEBI" id="CHEBI:29032"/>
        <dbReference type="ChEBI" id="CHEBI:30616"/>
        <dbReference type="ChEBI" id="CHEBI:33019"/>
        <dbReference type="ChEBI" id="CHEBI:57966"/>
        <dbReference type="ChEBI" id="CHEBI:456215"/>
        <dbReference type="EC" id="6.3.2.1"/>
    </reaction>
</comment>
<comment type="pathway">
    <text evidence="1">Cofactor biosynthesis; (R)-pantothenate biosynthesis; (R)-pantothenate from (R)-pantoate and beta-alanine: step 1/1.</text>
</comment>
<comment type="subunit">
    <text evidence="1">Homodimer.</text>
</comment>
<comment type="subcellular location">
    <subcellularLocation>
        <location evidence="1">Cytoplasm</location>
    </subcellularLocation>
</comment>
<comment type="miscellaneous">
    <text evidence="1">The reaction proceeds by a bi uni uni bi ping pong mechanism.</text>
</comment>
<comment type="similarity">
    <text evidence="1">Belongs to the pantothenate synthetase family.</text>
</comment>
<feature type="chain" id="PRO_0000128207" description="Pantothenate synthetase">
    <location>
        <begin position="1"/>
        <end position="286"/>
    </location>
</feature>
<feature type="active site" description="Proton donor" evidence="1">
    <location>
        <position position="39"/>
    </location>
</feature>
<feature type="binding site" evidence="1">
    <location>
        <begin position="32"/>
        <end position="39"/>
    </location>
    <ligand>
        <name>ATP</name>
        <dbReference type="ChEBI" id="CHEBI:30616"/>
    </ligand>
</feature>
<feature type="binding site" evidence="1">
    <location>
        <position position="63"/>
    </location>
    <ligand>
        <name>(R)-pantoate</name>
        <dbReference type="ChEBI" id="CHEBI:15980"/>
    </ligand>
</feature>
<feature type="binding site" evidence="1">
    <location>
        <position position="63"/>
    </location>
    <ligand>
        <name>beta-alanine</name>
        <dbReference type="ChEBI" id="CHEBI:57966"/>
    </ligand>
</feature>
<feature type="binding site" evidence="1">
    <location>
        <begin position="149"/>
        <end position="152"/>
    </location>
    <ligand>
        <name>ATP</name>
        <dbReference type="ChEBI" id="CHEBI:30616"/>
    </ligand>
</feature>
<feature type="binding site" evidence="1">
    <location>
        <position position="155"/>
    </location>
    <ligand>
        <name>(R)-pantoate</name>
        <dbReference type="ChEBI" id="CHEBI:15980"/>
    </ligand>
</feature>
<feature type="binding site" evidence="1">
    <location>
        <position position="178"/>
    </location>
    <ligand>
        <name>ATP</name>
        <dbReference type="ChEBI" id="CHEBI:30616"/>
    </ligand>
</feature>
<feature type="binding site" evidence="1">
    <location>
        <begin position="186"/>
        <end position="189"/>
    </location>
    <ligand>
        <name>ATP</name>
        <dbReference type="ChEBI" id="CHEBI:30616"/>
    </ligand>
</feature>
<protein>
    <recommendedName>
        <fullName evidence="1">Pantothenate synthetase</fullName>
        <shortName evidence="1">PS</shortName>
        <ecNumber evidence="1">6.3.2.1</ecNumber>
    </recommendedName>
    <alternativeName>
        <fullName evidence="1">Pantoate--beta-alanine ligase</fullName>
    </alternativeName>
    <alternativeName>
        <fullName evidence="1">Pantoate-activating enzyme</fullName>
    </alternativeName>
</protein>
<organism>
    <name type="scientific">Bartonella quintana (strain Toulouse)</name>
    <name type="common">Rochalimaea quintana</name>
    <dbReference type="NCBI Taxonomy" id="283165"/>
    <lineage>
        <taxon>Bacteria</taxon>
        <taxon>Pseudomonadati</taxon>
        <taxon>Pseudomonadota</taxon>
        <taxon>Alphaproteobacteria</taxon>
        <taxon>Hyphomicrobiales</taxon>
        <taxon>Bartonellaceae</taxon>
        <taxon>Bartonella</taxon>
    </lineage>
</organism>
<accession>Q6G079</accession>
<keyword id="KW-0067">ATP-binding</keyword>
<keyword id="KW-0963">Cytoplasm</keyword>
<keyword id="KW-0436">Ligase</keyword>
<keyword id="KW-0547">Nucleotide-binding</keyword>
<keyword id="KW-0566">Pantothenate biosynthesis</keyword>
<evidence type="ECO:0000255" key="1">
    <source>
        <dbReference type="HAMAP-Rule" id="MF_00158"/>
    </source>
</evidence>
<name>PANC_BARQU</name>
<sequence>MKIKVLKTIAEVRRYIAEERRLGFSIGFVPTMGALHEGHLALVWRARAICDRILVSIFVNPKQFGPHEDFDKYPRDLMADCALLEKAGVEYVFAPSVEEMWPPGNETIVKVEKLSRILIGKLRPGHFCGVTSVVAKLFNIVQPDKAFFGEKDFQQILIVRRMVEDLAFPIEIVGVPILREADGVASSSRNQFLTLEERKAAKIIPESGKAAEKLYRQGERSVDKLCKIVRDILQQESRAIIEKIDLRDMETLSVVKGKLNKPAVLLLTVRFGKVRLIDQYILQEKD</sequence>
<proteinExistence type="inferred from homology"/>
<reference key="1">
    <citation type="journal article" date="2004" name="Proc. Natl. Acad. Sci. U.S.A.">
        <title>The louse-borne human pathogen Bartonella quintana is a genomic derivative of the zoonotic agent Bartonella henselae.</title>
        <authorList>
            <person name="Alsmark U.C.M."/>
            <person name="Frank A.C."/>
            <person name="Karlberg E.O."/>
            <person name="Legault B.-A."/>
            <person name="Ardell D.H."/>
            <person name="Canbaeck B."/>
            <person name="Eriksson A.-S."/>
            <person name="Naeslund A.K."/>
            <person name="Handley S.A."/>
            <person name="Huvet M."/>
            <person name="La Scola B."/>
            <person name="Holmberg M."/>
            <person name="Andersson S.G.E."/>
        </authorList>
    </citation>
    <scope>NUCLEOTIDE SEQUENCE [LARGE SCALE GENOMIC DNA]</scope>
    <source>
        <strain>Toulouse</strain>
    </source>
</reference>
<gene>
    <name evidence="1" type="primary">panC</name>
    <name type="ordered locus">BQ04310</name>
</gene>
<dbReference type="EC" id="6.3.2.1" evidence="1"/>
<dbReference type="EMBL" id="BX897700">
    <property type="protein sequence ID" value="CAF25930.1"/>
    <property type="molecule type" value="Genomic_DNA"/>
</dbReference>
<dbReference type="RefSeq" id="WP_011179219.1">
    <property type="nucleotide sequence ID" value="NC_005955.1"/>
</dbReference>
<dbReference type="SMR" id="Q6G079"/>
<dbReference type="KEGG" id="bqu:BQ04310"/>
<dbReference type="eggNOG" id="COG0414">
    <property type="taxonomic scope" value="Bacteria"/>
</dbReference>
<dbReference type="HOGENOM" id="CLU_047148_0_0_5"/>
<dbReference type="OrthoDB" id="9773087at2"/>
<dbReference type="UniPathway" id="UPA00028">
    <property type="reaction ID" value="UER00005"/>
</dbReference>
<dbReference type="Proteomes" id="UP000000597">
    <property type="component" value="Chromosome"/>
</dbReference>
<dbReference type="GO" id="GO:0005829">
    <property type="term" value="C:cytosol"/>
    <property type="evidence" value="ECO:0007669"/>
    <property type="project" value="TreeGrafter"/>
</dbReference>
<dbReference type="GO" id="GO:0005524">
    <property type="term" value="F:ATP binding"/>
    <property type="evidence" value="ECO:0007669"/>
    <property type="project" value="UniProtKB-KW"/>
</dbReference>
<dbReference type="GO" id="GO:0004592">
    <property type="term" value="F:pantoate-beta-alanine ligase activity"/>
    <property type="evidence" value="ECO:0007669"/>
    <property type="project" value="UniProtKB-UniRule"/>
</dbReference>
<dbReference type="GO" id="GO:0015940">
    <property type="term" value="P:pantothenate biosynthetic process"/>
    <property type="evidence" value="ECO:0007669"/>
    <property type="project" value="UniProtKB-UniRule"/>
</dbReference>
<dbReference type="CDD" id="cd00560">
    <property type="entry name" value="PanC"/>
    <property type="match status" value="1"/>
</dbReference>
<dbReference type="FunFam" id="3.40.50.620:FF:000013">
    <property type="entry name" value="Pantothenate synthetase"/>
    <property type="match status" value="1"/>
</dbReference>
<dbReference type="Gene3D" id="3.40.50.620">
    <property type="entry name" value="HUPs"/>
    <property type="match status" value="1"/>
</dbReference>
<dbReference type="Gene3D" id="3.30.1300.10">
    <property type="entry name" value="Pantoate-beta-alanine ligase, C-terminal domain"/>
    <property type="match status" value="1"/>
</dbReference>
<dbReference type="HAMAP" id="MF_00158">
    <property type="entry name" value="PanC"/>
    <property type="match status" value="1"/>
</dbReference>
<dbReference type="InterPro" id="IPR004821">
    <property type="entry name" value="Cyt_trans-like"/>
</dbReference>
<dbReference type="InterPro" id="IPR003721">
    <property type="entry name" value="Pantoate_ligase"/>
</dbReference>
<dbReference type="InterPro" id="IPR042176">
    <property type="entry name" value="Pantoate_ligase_C"/>
</dbReference>
<dbReference type="InterPro" id="IPR014729">
    <property type="entry name" value="Rossmann-like_a/b/a_fold"/>
</dbReference>
<dbReference type="NCBIfam" id="TIGR00125">
    <property type="entry name" value="cyt_tran_rel"/>
    <property type="match status" value="1"/>
</dbReference>
<dbReference type="NCBIfam" id="TIGR00018">
    <property type="entry name" value="panC"/>
    <property type="match status" value="1"/>
</dbReference>
<dbReference type="PANTHER" id="PTHR21299">
    <property type="entry name" value="CYTIDYLATE KINASE/PANTOATE-BETA-ALANINE LIGASE"/>
    <property type="match status" value="1"/>
</dbReference>
<dbReference type="PANTHER" id="PTHR21299:SF1">
    <property type="entry name" value="PANTOATE--BETA-ALANINE LIGASE"/>
    <property type="match status" value="1"/>
</dbReference>
<dbReference type="Pfam" id="PF02569">
    <property type="entry name" value="Pantoate_ligase"/>
    <property type="match status" value="1"/>
</dbReference>
<dbReference type="SUPFAM" id="SSF52374">
    <property type="entry name" value="Nucleotidylyl transferase"/>
    <property type="match status" value="1"/>
</dbReference>